<organism>
    <name type="scientific">Staphylococcus aureus (strain N315)</name>
    <dbReference type="NCBI Taxonomy" id="158879"/>
    <lineage>
        <taxon>Bacteria</taxon>
        <taxon>Bacillati</taxon>
        <taxon>Bacillota</taxon>
        <taxon>Bacilli</taxon>
        <taxon>Bacillales</taxon>
        <taxon>Staphylococcaceae</taxon>
        <taxon>Staphylococcus</taxon>
    </lineage>
</organism>
<name>URE1_STAAN</name>
<proteinExistence type="evidence at protein level"/>
<accession>P67404</accession>
<accession>Q99RY2</accession>
<gene>
    <name evidence="1" type="primary">ureC</name>
    <name type="ordered locus">SA2084</name>
</gene>
<sequence length="571" mass="61780">MSFKMTQNQYTSLYGPTVGDSIRLGDTNLFAQIEKDYAVYGEEATFGGGKSIRDGMAQNPRVTRDDVNVADLVISNAVIIDYDKVVKADIGIKNGYIFAIGNAGNPDIMDNVDIIIGSTTDIIAAEGKIVTAGGIDTHVHFINPEQAEVALESGITTHIGGGTGASEGSKATTVTPGPWHIHRMLEAAEGLPINVGFTGKGQATNPTALIEQINAGAIGLKVHEDWGATPSALSHALDVADEFDVQIALHADTLNEAGFMEDTMAAVKDRVLHMYHTEGAGGGHAPDLIKSAAFSNILPSSTNPTLPYTHNTVDEHLDMVMITHHLNAAIPEDIAFADSRIRKETIAAEDVLQDMGVFSMISSDSQAMGRVGEVITRTWQVAHRMKEQRGPLDGDFEHNDNNRIKRYIAKYTINPAITHGISEYVGSIEPGKLADIVLWDPIFFGVKPELVVKGGLINSAVNGDANGSIPTSEPMKYRKMYGQYGGNLTSTSMTFVSKTAYENGINRALNLKRMVRPVKNIRQLSKADMKNNSATPKLDVDPQTYEVYVDGEKITSNAATELPLTQRYFLF</sequence>
<evidence type="ECO:0000255" key="1">
    <source>
        <dbReference type="HAMAP-Rule" id="MF_01953"/>
    </source>
</evidence>
<keyword id="KW-0963">Cytoplasm</keyword>
<keyword id="KW-0378">Hydrolase</keyword>
<keyword id="KW-0479">Metal-binding</keyword>
<keyword id="KW-0533">Nickel</keyword>
<protein>
    <recommendedName>
        <fullName evidence="1">Urease subunit alpha</fullName>
        <ecNumber evidence="1">3.5.1.5</ecNumber>
    </recommendedName>
    <alternativeName>
        <fullName evidence="1">Urea amidohydrolase subunit alpha</fullName>
    </alternativeName>
</protein>
<comment type="catalytic activity">
    <reaction evidence="1">
        <text>urea + 2 H2O + H(+) = hydrogencarbonate + 2 NH4(+)</text>
        <dbReference type="Rhea" id="RHEA:20557"/>
        <dbReference type="ChEBI" id="CHEBI:15377"/>
        <dbReference type="ChEBI" id="CHEBI:15378"/>
        <dbReference type="ChEBI" id="CHEBI:16199"/>
        <dbReference type="ChEBI" id="CHEBI:17544"/>
        <dbReference type="ChEBI" id="CHEBI:28938"/>
        <dbReference type="EC" id="3.5.1.5"/>
    </reaction>
</comment>
<comment type="cofactor">
    <cofactor evidence="1">
        <name>Ni cation</name>
        <dbReference type="ChEBI" id="CHEBI:25516"/>
    </cofactor>
    <text evidence="1">Binds 2 nickel ions per subunit.</text>
</comment>
<comment type="pathway">
    <text evidence="1">Nitrogen metabolism; urea degradation; CO(2) and NH(3) from urea (urease route): step 1/1.</text>
</comment>
<comment type="subunit">
    <text evidence="1">Heterotrimer of UreA (gamma), UreB (beta) and UreC (alpha) subunits. Three heterotrimers associate to form the active enzyme.</text>
</comment>
<comment type="subcellular location">
    <subcellularLocation>
        <location evidence="1">Cytoplasm</location>
    </subcellularLocation>
</comment>
<comment type="PTM">
    <text evidence="1">Carboxylation allows a single lysine to coordinate two nickel ions.</text>
</comment>
<comment type="similarity">
    <text evidence="1">Belongs to the metallo-dependent hydrolases superfamily. Urease alpha subunit family.</text>
</comment>
<feature type="chain" id="PRO_0000067554" description="Urease subunit alpha">
    <location>
        <begin position="1"/>
        <end position="571"/>
    </location>
</feature>
<feature type="domain" description="Urease" evidence="1">
    <location>
        <begin position="133"/>
        <end position="571"/>
    </location>
</feature>
<feature type="active site" description="Proton donor" evidence="1">
    <location>
        <position position="324"/>
    </location>
</feature>
<feature type="binding site" evidence="1">
    <location>
        <position position="138"/>
    </location>
    <ligand>
        <name>Ni(2+)</name>
        <dbReference type="ChEBI" id="CHEBI:49786"/>
        <label>1</label>
    </ligand>
</feature>
<feature type="binding site" evidence="1">
    <location>
        <position position="140"/>
    </location>
    <ligand>
        <name>Ni(2+)</name>
        <dbReference type="ChEBI" id="CHEBI:49786"/>
        <label>1</label>
    </ligand>
</feature>
<feature type="binding site" description="via carbamate group" evidence="1">
    <location>
        <position position="221"/>
    </location>
    <ligand>
        <name>Ni(2+)</name>
        <dbReference type="ChEBI" id="CHEBI:49786"/>
        <label>1</label>
    </ligand>
</feature>
<feature type="binding site" description="via carbamate group" evidence="1">
    <location>
        <position position="221"/>
    </location>
    <ligand>
        <name>Ni(2+)</name>
        <dbReference type="ChEBI" id="CHEBI:49786"/>
        <label>2</label>
    </ligand>
</feature>
<feature type="binding site" evidence="1">
    <location>
        <position position="223"/>
    </location>
    <ligand>
        <name>substrate</name>
    </ligand>
</feature>
<feature type="binding site" evidence="1">
    <location>
        <position position="250"/>
    </location>
    <ligand>
        <name>Ni(2+)</name>
        <dbReference type="ChEBI" id="CHEBI:49786"/>
        <label>2</label>
    </ligand>
</feature>
<feature type="binding site" evidence="1">
    <location>
        <position position="276"/>
    </location>
    <ligand>
        <name>Ni(2+)</name>
        <dbReference type="ChEBI" id="CHEBI:49786"/>
        <label>2</label>
    </ligand>
</feature>
<feature type="binding site" evidence="1">
    <location>
        <position position="364"/>
    </location>
    <ligand>
        <name>Ni(2+)</name>
        <dbReference type="ChEBI" id="CHEBI:49786"/>
        <label>1</label>
    </ligand>
</feature>
<feature type="modified residue" description="N6-carboxylysine" evidence="1">
    <location>
        <position position="221"/>
    </location>
</feature>
<dbReference type="EC" id="3.5.1.5" evidence="1"/>
<dbReference type="EMBL" id="BA000018">
    <property type="protein sequence ID" value="BAB43382.1"/>
    <property type="molecule type" value="Genomic_DNA"/>
</dbReference>
<dbReference type="PIR" id="E90027">
    <property type="entry name" value="E90027"/>
</dbReference>
<dbReference type="RefSeq" id="WP_000008673.1">
    <property type="nucleotide sequence ID" value="NC_002745.2"/>
</dbReference>
<dbReference type="SMR" id="P67404"/>
<dbReference type="EnsemblBacteria" id="BAB43382">
    <property type="protein sequence ID" value="BAB43382"/>
    <property type="gene ID" value="BAB43382"/>
</dbReference>
<dbReference type="KEGG" id="sau:SA2084"/>
<dbReference type="HOGENOM" id="CLU_000980_0_0_9"/>
<dbReference type="UniPathway" id="UPA00258">
    <property type="reaction ID" value="UER00370"/>
</dbReference>
<dbReference type="GO" id="GO:0005737">
    <property type="term" value="C:cytoplasm"/>
    <property type="evidence" value="ECO:0007669"/>
    <property type="project" value="UniProtKB-SubCell"/>
</dbReference>
<dbReference type="GO" id="GO:0016151">
    <property type="term" value="F:nickel cation binding"/>
    <property type="evidence" value="ECO:0007669"/>
    <property type="project" value="UniProtKB-UniRule"/>
</dbReference>
<dbReference type="GO" id="GO:0009039">
    <property type="term" value="F:urease activity"/>
    <property type="evidence" value="ECO:0007669"/>
    <property type="project" value="UniProtKB-UniRule"/>
</dbReference>
<dbReference type="GO" id="GO:0043419">
    <property type="term" value="P:urea catabolic process"/>
    <property type="evidence" value="ECO:0007669"/>
    <property type="project" value="UniProtKB-UniRule"/>
</dbReference>
<dbReference type="CDD" id="cd00375">
    <property type="entry name" value="Urease_alpha"/>
    <property type="match status" value="1"/>
</dbReference>
<dbReference type="Gene3D" id="3.20.20.140">
    <property type="entry name" value="Metal-dependent hydrolases"/>
    <property type="match status" value="1"/>
</dbReference>
<dbReference type="Gene3D" id="2.30.40.10">
    <property type="entry name" value="Urease, subunit C, domain 1"/>
    <property type="match status" value="1"/>
</dbReference>
<dbReference type="HAMAP" id="MF_01953">
    <property type="entry name" value="Urease_alpha"/>
    <property type="match status" value="1"/>
</dbReference>
<dbReference type="InterPro" id="IPR006680">
    <property type="entry name" value="Amidohydro-rel"/>
</dbReference>
<dbReference type="InterPro" id="IPR011059">
    <property type="entry name" value="Metal-dep_hydrolase_composite"/>
</dbReference>
<dbReference type="InterPro" id="IPR032466">
    <property type="entry name" value="Metal_Hydrolase"/>
</dbReference>
<dbReference type="InterPro" id="IPR011612">
    <property type="entry name" value="Urease_alpha_N_dom"/>
</dbReference>
<dbReference type="InterPro" id="IPR050112">
    <property type="entry name" value="Urease_alpha_subunit"/>
</dbReference>
<dbReference type="InterPro" id="IPR017950">
    <property type="entry name" value="Urease_AS"/>
</dbReference>
<dbReference type="InterPro" id="IPR005848">
    <property type="entry name" value="Urease_asu"/>
</dbReference>
<dbReference type="InterPro" id="IPR017951">
    <property type="entry name" value="Urease_asu_c"/>
</dbReference>
<dbReference type="InterPro" id="IPR029754">
    <property type="entry name" value="Urease_Ni-bd"/>
</dbReference>
<dbReference type="NCBIfam" id="NF009686">
    <property type="entry name" value="PRK13207.1"/>
    <property type="match status" value="1"/>
</dbReference>
<dbReference type="NCBIfam" id="TIGR01792">
    <property type="entry name" value="urease_alph"/>
    <property type="match status" value="1"/>
</dbReference>
<dbReference type="PANTHER" id="PTHR43440">
    <property type="entry name" value="UREASE"/>
    <property type="match status" value="1"/>
</dbReference>
<dbReference type="PANTHER" id="PTHR43440:SF1">
    <property type="entry name" value="UREASE"/>
    <property type="match status" value="1"/>
</dbReference>
<dbReference type="Pfam" id="PF01979">
    <property type="entry name" value="Amidohydro_1"/>
    <property type="match status" value="1"/>
</dbReference>
<dbReference type="Pfam" id="PF00449">
    <property type="entry name" value="Urease_alpha"/>
    <property type="match status" value="1"/>
</dbReference>
<dbReference type="PRINTS" id="PR01752">
    <property type="entry name" value="UREASE"/>
</dbReference>
<dbReference type="SUPFAM" id="SSF51338">
    <property type="entry name" value="Composite domain of metallo-dependent hydrolases"/>
    <property type="match status" value="1"/>
</dbReference>
<dbReference type="SUPFAM" id="SSF51556">
    <property type="entry name" value="Metallo-dependent hydrolases"/>
    <property type="match status" value="1"/>
</dbReference>
<dbReference type="PROSITE" id="PS01120">
    <property type="entry name" value="UREASE_1"/>
    <property type="match status" value="1"/>
</dbReference>
<dbReference type="PROSITE" id="PS00145">
    <property type="entry name" value="UREASE_2"/>
    <property type="match status" value="1"/>
</dbReference>
<dbReference type="PROSITE" id="PS51368">
    <property type="entry name" value="UREASE_3"/>
    <property type="match status" value="1"/>
</dbReference>
<reference key="1">
    <citation type="journal article" date="2001" name="Lancet">
        <title>Whole genome sequencing of meticillin-resistant Staphylococcus aureus.</title>
        <authorList>
            <person name="Kuroda M."/>
            <person name="Ohta T."/>
            <person name="Uchiyama I."/>
            <person name="Baba T."/>
            <person name="Yuzawa H."/>
            <person name="Kobayashi I."/>
            <person name="Cui L."/>
            <person name="Oguchi A."/>
            <person name="Aoki K."/>
            <person name="Nagai Y."/>
            <person name="Lian J.-Q."/>
            <person name="Ito T."/>
            <person name="Kanamori M."/>
            <person name="Matsumaru H."/>
            <person name="Maruyama A."/>
            <person name="Murakami H."/>
            <person name="Hosoyama A."/>
            <person name="Mizutani-Ui Y."/>
            <person name="Takahashi N.K."/>
            <person name="Sawano T."/>
            <person name="Inoue R."/>
            <person name="Kaito C."/>
            <person name="Sekimizu K."/>
            <person name="Hirakawa H."/>
            <person name="Kuhara S."/>
            <person name="Goto S."/>
            <person name="Yabuzaki J."/>
            <person name="Kanehisa M."/>
            <person name="Yamashita A."/>
            <person name="Oshima K."/>
            <person name="Furuya K."/>
            <person name="Yoshino C."/>
            <person name="Shiba T."/>
            <person name="Hattori M."/>
            <person name="Ogasawara N."/>
            <person name="Hayashi H."/>
            <person name="Hiramatsu K."/>
        </authorList>
    </citation>
    <scope>NUCLEOTIDE SEQUENCE [LARGE SCALE GENOMIC DNA]</scope>
    <source>
        <strain>N315</strain>
    </source>
</reference>
<reference key="2">
    <citation type="submission" date="2007-10" db="UniProtKB">
        <title>Shotgun proteomic analysis of total and membrane protein extracts of S. aureus strain N315.</title>
        <authorList>
            <person name="Vaezzadeh A.R."/>
            <person name="Deshusses J."/>
            <person name="Lescuyer P."/>
            <person name="Hochstrasser D.F."/>
        </authorList>
    </citation>
    <scope>IDENTIFICATION BY MASS SPECTROMETRY [LARGE SCALE ANALYSIS]</scope>
    <source>
        <strain>N315</strain>
    </source>
</reference>